<sequence>MMFKNFPFFKGKKDTSFDHLVEEVKKGYIPEHIAIIMDGNGRWAKRRAMPRIAGHHEGMQVVKKITKFASKLNVKVLTLYAFSTENWKRPKKEVDYLMKLPEEFLGTFLPELIEENVQVRVIGQQDRLPTHTRRAMEKAMEETKENTGLILNFALNYGSRDEIVSAVQHMMKDSEEGKVRVEDVSEEMLSSYLMTSSLPDPELLIRTSGELRISNFMLWQIAYSEFWFTDVYWPDFTEEHLLNAITDFQHRGRRFGGV</sequence>
<name>ISPT_BACHK</name>
<evidence type="ECO:0000255" key="1">
    <source>
        <dbReference type="HAMAP-Rule" id="MF_01139"/>
    </source>
</evidence>
<reference key="1">
    <citation type="journal article" date="2006" name="J. Bacteriol.">
        <title>Pathogenomic sequence analysis of Bacillus cereus and Bacillus thuringiensis isolates closely related to Bacillus anthracis.</title>
        <authorList>
            <person name="Han C.S."/>
            <person name="Xie G."/>
            <person name="Challacombe J.F."/>
            <person name="Altherr M.R."/>
            <person name="Bhotika S.S."/>
            <person name="Bruce D."/>
            <person name="Campbell C.S."/>
            <person name="Campbell M.L."/>
            <person name="Chen J."/>
            <person name="Chertkov O."/>
            <person name="Cleland C."/>
            <person name="Dimitrijevic M."/>
            <person name="Doggett N.A."/>
            <person name="Fawcett J.J."/>
            <person name="Glavina T."/>
            <person name="Goodwin L.A."/>
            <person name="Hill K.K."/>
            <person name="Hitchcock P."/>
            <person name="Jackson P.J."/>
            <person name="Keim P."/>
            <person name="Kewalramani A.R."/>
            <person name="Longmire J."/>
            <person name="Lucas S."/>
            <person name="Malfatti S."/>
            <person name="McMurry K."/>
            <person name="Meincke L.J."/>
            <person name="Misra M."/>
            <person name="Moseman B.L."/>
            <person name="Mundt M."/>
            <person name="Munk A.C."/>
            <person name="Okinaka R.T."/>
            <person name="Parson-Quintana B."/>
            <person name="Reilly L.P."/>
            <person name="Richardson P."/>
            <person name="Robinson D.L."/>
            <person name="Rubin E."/>
            <person name="Saunders E."/>
            <person name="Tapia R."/>
            <person name="Tesmer J.G."/>
            <person name="Thayer N."/>
            <person name="Thompson L.S."/>
            <person name="Tice H."/>
            <person name="Ticknor L.O."/>
            <person name="Wills P.L."/>
            <person name="Brettin T.S."/>
            <person name="Gilna P."/>
        </authorList>
    </citation>
    <scope>NUCLEOTIDE SEQUENCE [LARGE SCALE GENOMIC DNA]</scope>
    <source>
        <strain>97-27</strain>
    </source>
</reference>
<comment type="function">
    <text evidence="1">Catalyzes the condensation of isopentenyl diphosphate (IPP) with allylic pyrophosphates generating different type of terpenoids.</text>
</comment>
<comment type="cofactor">
    <cofactor evidence="1">
        <name>Mg(2+)</name>
        <dbReference type="ChEBI" id="CHEBI:18420"/>
    </cofactor>
    <text evidence="1">Binds 2 magnesium ions per subunit.</text>
</comment>
<comment type="subunit">
    <text evidence="1">Homodimer.</text>
</comment>
<comment type="similarity">
    <text evidence="1">Belongs to the UPP synthase family.</text>
</comment>
<dbReference type="EC" id="2.5.1.-" evidence="1"/>
<dbReference type="EMBL" id="AE017355">
    <property type="protein sequence ID" value="AAT60598.1"/>
    <property type="molecule type" value="Genomic_DNA"/>
</dbReference>
<dbReference type="RefSeq" id="WP_000971301.1">
    <property type="nucleotide sequence ID" value="NC_005957.1"/>
</dbReference>
<dbReference type="RefSeq" id="YP_037884.1">
    <property type="nucleotide sequence ID" value="NC_005957.1"/>
</dbReference>
<dbReference type="SMR" id="Q6HEZ2"/>
<dbReference type="GeneID" id="93007289"/>
<dbReference type="KEGG" id="btk:BT9727_3564"/>
<dbReference type="PATRIC" id="fig|281309.8.peg.3802"/>
<dbReference type="HOGENOM" id="CLU_038505_1_1_9"/>
<dbReference type="Proteomes" id="UP000001301">
    <property type="component" value="Chromosome"/>
</dbReference>
<dbReference type="GO" id="GO:0005829">
    <property type="term" value="C:cytosol"/>
    <property type="evidence" value="ECO:0007669"/>
    <property type="project" value="TreeGrafter"/>
</dbReference>
<dbReference type="GO" id="GO:0008834">
    <property type="term" value="F:ditrans,polycis-undecaprenyl-diphosphate synthase [(2E,6E)-farnesyl-diphosphate specific] activity"/>
    <property type="evidence" value="ECO:0007669"/>
    <property type="project" value="TreeGrafter"/>
</dbReference>
<dbReference type="GO" id="GO:0000287">
    <property type="term" value="F:magnesium ion binding"/>
    <property type="evidence" value="ECO:0007669"/>
    <property type="project" value="UniProtKB-UniRule"/>
</dbReference>
<dbReference type="GO" id="GO:0030145">
    <property type="term" value="F:manganese ion binding"/>
    <property type="evidence" value="ECO:0007669"/>
    <property type="project" value="TreeGrafter"/>
</dbReference>
<dbReference type="GO" id="GO:0016094">
    <property type="term" value="P:polyprenol biosynthetic process"/>
    <property type="evidence" value="ECO:0007669"/>
    <property type="project" value="TreeGrafter"/>
</dbReference>
<dbReference type="CDD" id="cd00475">
    <property type="entry name" value="Cis_IPPS"/>
    <property type="match status" value="1"/>
</dbReference>
<dbReference type="FunFam" id="3.40.1180.10:FF:000001">
    <property type="entry name" value="(2E,6E)-farnesyl-diphosphate-specific ditrans,polycis-undecaprenyl-diphosphate synthase"/>
    <property type="match status" value="1"/>
</dbReference>
<dbReference type="Gene3D" id="3.40.1180.10">
    <property type="entry name" value="Decaprenyl diphosphate synthase-like"/>
    <property type="match status" value="1"/>
</dbReference>
<dbReference type="HAMAP" id="MF_01139">
    <property type="entry name" value="ISPT"/>
    <property type="match status" value="1"/>
</dbReference>
<dbReference type="InterPro" id="IPR001441">
    <property type="entry name" value="UPP_synth-like"/>
</dbReference>
<dbReference type="InterPro" id="IPR018520">
    <property type="entry name" value="UPP_synth-like_CS"/>
</dbReference>
<dbReference type="InterPro" id="IPR036424">
    <property type="entry name" value="UPP_synth-like_sf"/>
</dbReference>
<dbReference type="NCBIfam" id="NF011405">
    <property type="entry name" value="PRK14830.1"/>
    <property type="match status" value="1"/>
</dbReference>
<dbReference type="NCBIfam" id="TIGR00055">
    <property type="entry name" value="uppS"/>
    <property type="match status" value="1"/>
</dbReference>
<dbReference type="PANTHER" id="PTHR10291:SF0">
    <property type="entry name" value="DEHYDRODOLICHYL DIPHOSPHATE SYNTHASE 2"/>
    <property type="match status" value="1"/>
</dbReference>
<dbReference type="PANTHER" id="PTHR10291">
    <property type="entry name" value="DEHYDRODOLICHYL DIPHOSPHATE SYNTHASE FAMILY MEMBER"/>
    <property type="match status" value="1"/>
</dbReference>
<dbReference type="Pfam" id="PF01255">
    <property type="entry name" value="Prenyltransf"/>
    <property type="match status" value="1"/>
</dbReference>
<dbReference type="SUPFAM" id="SSF64005">
    <property type="entry name" value="Undecaprenyl diphosphate synthase"/>
    <property type="match status" value="1"/>
</dbReference>
<dbReference type="PROSITE" id="PS01066">
    <property type="entry name" value="UPP_SYNTHASE"/>
    <property type="match status" value="1"/>
</dbReference>
<proteinExistence type="inferred from homology"/>
<accession>Q6HEZ2</accession>
<feature type="chain" id="PRO_0000123570" description="Isoprenyl transferase">
    <location>
        <begin position="1"/>
        <end position="258"/>
    </location>
</feature>
<feature type="active site" evidence="1">
    <location>
        <position position="38"/>
    </location>
</feature>
<feature type="active site" description="Proton acceptor" evidence="1">
    <location>
        <position position="86"/>
    </location>
</feature>
<feature type="binding site" evidence="1">
    <location>
        <position position="38"/>
    </location>
    <ligand>
        <name>Mg(2+)</name>
        <dbReference type="ChEBI" id="CHEBI:18420"/>
    </ligand>
</feature>
<feature type="binding site" evidence="1">
    <location>
        <begin position="39"/>
        <end position="42"/>
    </location>
    <ligand>
        <name>substrate</name>
    </ligand>
</feature>
<feature type="binding site" evidence="1">
    <location>
        <position position="43"/>
    </location>
    <ligand>
        <name>substrate</name>
    </ligand>
</feature>
<feature type="binding site" evidence="1">
    <location>
        <position position="51"/>
    </location>
    <ligand>
        <name>substrate</name>
    </ligand>
</feature>
<feature type="binding site" evidence="1">
    <location>
        <position position="55"/>
    </location>
    <ligand>
        <name>substrate</name>
    </ligand>
</feature>
<feature type="binding site" evidence="1">
    <location>
        <begin position="83"/>
        <end position="85"/>
    </location>
    <ligand>
        <name>substrate</name>
    </ligand>
</feature>
<feature type="binding site" evidence="1">
    <location>
        <position position="87"/>
    </location>
    <ligand>
        <name>substrate</name>
    </ligand>
</feature>
<feature type="binding site" evidence="1">
    <location>
        <position position="89"/>
    </location>
    <ligand>
        <name>substrate</name>
    </ligand>
</feature>
<feature type="binding site" evidence="1">
    <location>
        <position position="206"/>
    </location>
    <ligand>
        <name>substrate</name>
    </ligand>
</feature>
<feature type="binding site" evidence="1">
    <location>
        <begin position="212"/>
        <end position="214"/>
    </location>
    <ligand>
        <name>substrate</name>
    </ligand>
</feature>
<feature type="binding site" evidence="1">
    <location>
        <position position="225"/>
    </location>
    <ligand>
        <name>Mg(2+)</name>
        <dbReference type="ChEBI" id="CHEBI:18420"/>
    </ligand>
</feature>
<organism>
    <name type="scientific">Bacillus thuringiensis subsp. konkukian (strain 97-27)</name>
    <dbReference type="NCBI Taxonomy" id="281309"/>
    <lineage>
        <taxon>Bacteria</taxon>
        <taxon>Bacillati</taxon>
        <taxon>Bacillota</taxon>
        <taxon>Bacilli</taxon>
        <taxon>Bacillales</taxon>
        <taxon>Bacillaceae</taxon>
        <taxon>Bacillus</taxon>
        <taxon>Bacillus cereus group</taxon>
    </lineage>
</organism>
<gene>
    <name evidence="1" type="primary">uppS</name>
    <name type="ordered locus">BT9727_3564</name>
</gene>
<keyword id="KW-0460">Magnesium</keyword>
<keyword id="KW-0479">Metal-binding</keyword>
<keyword id="KW-0808">Transferase</keyword>
<protein>
    <recommendedName>
        <fullName evidence="1">Isoprenyl transferase</fullName>
        <ecNumber evidence="1">2.5.1.-</ecNumber>
    </recommendedName>
</protein>